<accession>Q76MT9</accession>
<organismHost>
    <name type="scientific">Aves</name>
    <dbReference type="NCBI Taxonomy" id="8782"/>
</organismHost>
<organismHost>
    <name type="scientific">Cetacea</name>
    <name type="common">whales</name>
    <dbReference type="NCBI Taxonomy" id="9721"/>
</organismHost>
<organismHost>
    <name type="scientific">Homo sapiens</name>
    <name type="common">Human</name>
    <dbReference type="NCBI Taxonomy" id="9606"/>
</organismHost>
<organismHost>
    <name type="scientific">Phocidae</name>
    <name type="common">true seals</name>
    <dbReference type="NCBI Taxonomy" id="9709"/>
</organismHost>
<organismHost>
    <name type="scientific">Sus scrofa</name>
    <name type="common">Pig</name>
    <dbReference type="NCBI Taxonomy" id="9823"/>
</organismHost>
<name>NEP_I000X</name>
<feature type="chain" id="PRO_0000324193" description="Nuclear export protein">
    <location>
        <begin position="1"/>
        <end position="121"/>
    </location>
</feature>
<feature type="short sequence motif" description="Nuclear export signal" evidence="1">
    <location>
        <begin position="12"/>
        <end position="21"/>
    </location>
</feature>
<feature type="short sequence motif" description="Nuclear export signal" evidence="1">
    <location>
        <begin position="85"/>
        <end position="94"/>
    </location>
</feature>
<reference key="1">
    <citation type="submission" date="2000-01" db="EMBL/GenBank/DDBJ databases">
        <authorList>
            <person name="Seong B."/>
            <person name="Lee K."/>
        </authorList>
    </citation>
    <scope>NUCLEOTIDE SEQUENCE [GENOMIC RNA]</scope>
</reference>
<reference key="2">
    <citation type="submission" date="2006-08" db="EMBL/GenBank/DDBJ databases">
        <title>Identification of mutations in the cold-adapted X-31 ca influenza vaccine strain.</title>
        <authorList>
            <person name="Lee K.-H."/>
            <person name="Kim Y.H."/>
            <person name="Ha S.-H."/>
            <person name="Kim H.A."/>
            <person name="Seo S.-U."/>
            <person name="Seong B.L."/>
        </authorList>
    </citation>
    <scope>NUCLEOTIDE SEQUENCE [GENOMIC RNA]</scope>
</reference>
<keyword id="KW-0002">3D-structure</keyword>
<keyword id="KW-0025">Alternative splicing</keyword>
<keyword id="KW-1048">Host nucleus</keyword>
<keyword id="KW-0945">Host-virus interaction</keyword>
<keyword id="KW-0813">Transport</keyword>
<keyword id="KW-0946">Virion</keyword>
<comment type="function">
    <text evidence="1">Mediates the nuclear export of encapsidated genomic RNAs (ribonucleoproteins, RNPs). Acts as an adapter between viral RNPs complexes and the nuclear export machinery of the cell. Possesses no intrinsic RNA-binding activity, but includes a C-terminal M1-binding domain. This domain is believed to allow recognition of RNPs bound to the protein M1. Since protein M1 is not available in large quantities before late stages of infection, such an indirect recognition mechanism probably ensures that genomic RNPs are not exported from the host nucleus until sufficient quantities of viral mRNA and progeny genomic RNA have been synthesized. Furthermore, the RNPs enter the host cytoplasm only when associated with the M1 protein that is necessary to guide them to the plasma membrane. May down-regulate viral RNA synthesis when overproduced.</text>
</comment>
<comment type="subunit">
    <text evidence="1">Interacts with protein M1. May interact with host nucleoporin RAB/HRB and exportin XPO1/CRM1.</text>
</comment>
<comment type="subcellular location">
    <subcellularLocation>
        <location evidence="1">Virion</location>
    </subcellularLocation>
    <subcellularLocation>
        <location evidence="1">Host nucleus</location>
    </subcellularLocation>
</comment>
<comment type="alternative products">
    <event type="alternative splicing"/>
    <isoform>
        <id>Q76MT9-1</id>
        <name>NEP</name>
        <name>NS2</name>
        <sequence type="displayed"/>
    </isoform>
    <isoform>
        <id>Q0PDM0-1</id>
        <name>NS1</name>
        <sequence type="external"/>
    </isoform>
</comment>
<comment type="similarity">
    <text evidence="1">Belongs to the influenza viruses NEP family.</text>
</comment>
<gene>
    <name evidence="1" type="primary">NS</name>
</gene>
<organism>
    <name type="scientific">Influenza A virus (strain A/X-31 H3N2)</name>
    <dbReference type="NCBI Taxonomy" id="132504"/>
    <lineage>
        <taxon>Viruses</taxon>
        <taxon>Riboviria</taxon>
        <taxon>Orthornavirae</taxon>
        <taxon>Negarnaviricota</taxon>
        <taxon>Polyploviricotina</taxon>
        <taxon>Insthoviricetes</taxon>
        <taxon>Articulavirales</taxon>
        <taxon>Orthomyxoviridae</taxon>
        <taxon>Alphainfluenzavirus</taxon>
        <taxon>Alphainfluenzavirus influenzae</taxon>
        <taxon>Influenza A virus</taxon>
    </lineage>
</organism>
<dbReference type="EMBL" id="AB036777">
    <property type="protein sequence ID" value="BAA99396.1"/>
    <property type="molecule type" value="Genomic_RNA"/>
</dbReference>
<dbReference type="EMBL" id="DQ874880">
    <property type="protein sequence ID" value="ABH05858.1"/>
    <property type="molecule type" value="Genomic_RNA"/>
</dbReference>
<dbReference type="PDB" id="8ROP">
    <property type="method" value="X-ray"/>
    <property type="resolution" value="1.15 A"/>
    <property type="chains" value="C=111-118"/>
</dbReference>
<dbReference type="PDBsum" id="8ROP"/>
<dbReference type="SMR" id="Q76MT9"/>
<dbReference type="GO" id="GO:0042025">
    <property type="term" value="C:host cell nucleus"/>
    <property type="evidence" value="ECO:0007669"/>
    <property type="project" value="UniProtKB-SubCell"/>
</dbReference>
<dbReference type="GO" id="GO:0044423">
    <property type="term" value="C:virion component"/>
    <property type="evidence" value="ECO:0007669"/>
    <property type="project" value="UniProtKB-UniRule"/>
</dbReference>
<dbReference type="GO" id="GO:0039675">
    <property type="term" value="P:exit of virus from host cell nucleus through nuclear pore"/>
    <property type="evidence" value="ECO:0007669"/>
    <property type="project" value="UniProtKB-UniRule"/>
</dbReference>
<dbReference type="FunFam" id="1.10.287.230:FF:000001">
    <property type="entry name" value="Nuclear export protein"/>
    <property type="match status" value="1"/>
</dbReference>
<dbReference type="Gene3D" id="1.10.287.230">
    <property type="match status" value="1"/>
</dbReference>
<dbReference type="HAMAP" id="MF_04067">
    <property type="entry name" value="INFV_NEP"/>
    <property type="match status" value="1"/>
</dbReference>
<dbReference type="InterPro" id="IPR000968">
    <property type="entry name" value="Flu_NS2"/>
</dbReference>
<dbReference type="Pfam" id="PF00601">
    <property type="entry name" value="Flu_NS2"/>
    <property type="match status" value="1"/>
</dbReference>
<dbReference type="SUPFAM" id="SSF101156">
    <property type="entry name" value="Nonstructural protein ns2, Nep, M1-binding domain"/>
    <property type="match status" value="1"/>
</dbReference>
<proteinExistence type="evidence at protein level"/>
<sequence>MDPNTVSSFQDILLRMSKMQLESSSEDLNGMITQFESLKLYRDSLGEAVMRMGDLHSLQNRNEKWREQLGQKFEEIRWLIEEVRHKLKITENSFEQITFMQALHLLLEVEQEIRTFSFQLI</sequence>
<protein>
    <recommendedName>
        <fullName evidence="1">Nuclear export protein</fullName>
        <shortName evidence="1">NEP</shortName>
    </recommendedName>
    <alternativeName>
        <fullName evidence="1">Non-structural protein 2</fullName>
        <shortName evidence="1">NS2</shortName>
    </alternativeName>
</protein>
<evidence type="ECO:0000255" key="1">
    <source>
        <dbReference type="HAMAP-Rule" id="MF_04067"/>
    </source>
</evidence>